<gene>
    <name evidence="3" type="primary">IGF1</name>
    <name evidence="3" type="synonym">IGF-1</name>
</gene>
<organism>
    <name type="scientific">Rhinopithecus roxellana</name>
    <name type="common">Golden snub-nosed monkey</name>
    <name type="synonym">Pygathrix roxellana</name>
    <dbReference type="NCBI Taxonomy" id="61622"/>
    <lineage>
        <taxon>Eukaryota</taxon>
        <taxon>Metazoa</taxon>
        <taxon>Chordata</taxon>
        <taxon>Craniata</taxon>
        <taxon>Vertebrata</taxon>
        <taxon>Euteleostomi</taxon>
        <taxon>Mammalia</taxon>
        <taxon>Eutheria</taxon>
        <taxon>Euarchontoglires</taxon>
        <taxon>Primates</taxon>
        <taxon>Haplorrhini</taxon>
        <taxon>Catarrhini</taxon>
        <taxon>Cercopithecidae</taxon>
        <taxon>Colobinae</taxon>
        <taxon>Rhinopithecus</taxon>
    </lineage>
</organism>
<sequence length="153" mass="16974">MGKISSLPTQLFKCCFCDFLKVKMHIMSSSHLLYLALCLLTFTSSATAGPETLCGAELVDALQFVCGDRGFYFNKPTGYGSSSRRAPQTGIVDECCFRSCDLRRLEMYCAPLKPAKSARSVRAQRHTDMPKAQKEVHLKNASRGSAGNKNYRM</sequence>
<name>IGF1_RHIRO</name>
<accession>Q68LC0</accession>
<reference key="1">
    <citation type="submission" date="2004-07" db="EMBL/GenBank/DDBJ databases">
        <authorList>
            <person name="Song L."/>
            <person name="Hu X."/>
            <person name="Yue B."/>
            <person name="Zhang Z."/>
            <person name="Zhu M."/>
            <person name="Shen F."/>
            <person name="Zhang W."/>
        </authorList>
    </citation>
    <scope>NUCLEOTIDE SEQUENCE [MRNA]</scope>
    <source>
        <tissue>Liver</tissue>
    </source>
</reference>
<evidence type="ECO:0000250" key="1"/>
<evidence type="ECO:0000250" key="2">
    <source>
        <dbReference type="UniProtKB" id="P05017"/>
    </source>
</evidence>
<evidence type="ECO:0000250" key="3">
    <source>
        <dbReference type="UniProtKB" id="P05019"/>
    </source>
</evidence>
<evidence type="ECO:0000250" key="4">
    <source>
        <dbReference type="UniProtKB" id="P08025"/>
    </source>
</evidence>
<evidence type="ECO:0000256" key="5">
    <source>
        <dbReference type="SAM" id="MobiDB-lite"/>
    </source>
</evidence>
<evidence type="ECO:0000305" key="6"/>
<keyword id="KW-0165">Cleavage on pair of basic residues</keyword>
<keyword id="KW-1015">Disulfide bond</keyword>
<keyword id="KW-0339">Growth factor</keyword>
<keyword id="KW-1185">Reference proteome</keyword>
<keyword id="KW-0964">Secreted</keyword>
<keyword id="KW-0732">Signal</keyword>
<comment type="function">
    <text evidence="2 3 4">The insulin-like growth factors, isolated from plasma, are structurally and functionally related to insulin but have a much higher growth-promoting activity. May be a physiological regulator of [1-14C]-2-deoxy-D-glucose (2DG) transport and glycogen synthesis in osteoblasts. Stimulates glucose transport in bone-derived osteoblastic (PyMS) cells and is effective at much lower concentrations than insulin, not only regarding glycogen and DNA synthesis but also with regard to enhancing glucose uptake. May play a role in synapse maturation. Ca(2+)-dependent exocytosis of IGF1 is required for sensory perception of smell in the olfactory bulb. Acts as a ligand for IGF1R. Binds to the alpha subunit of IGF1R, leading to the activation of the intrinsic tyrosine kinase activity which autophosphorylates tyrosine residues in the beta subunit thus initiating a cascade of down-stream signaling events leading to activation of the PI3K-AKT/PKB and the Ras-MAPK pathways. Binds to integrins ITGAV:ITGB3 and ITGA6:ITGB4. Its binding to integrins and subsequent ternary complex formation with integrins and IGFR1 are essential for IGF1 signaling. Induces the phosphorylation and activation of IGFR1, MAPK3/ERK1, MAPK1/ERK2 and AKT1 (By similarity). As part of the MAPK/ERK signaling pathway, acts as a negative regulator of apoptosis in cardiomyocytes via promotion of STUB1/CHIP-mediated ubiquitination and degradation of ICER-type isoforms of CREM (By similarity).</text>
</comment>
<comment type="subunit">
    <text evidence="3">Forms a ternary complex with IGFR1 and ITGAV:ITGB3. Forms a ternary complex with IGFR1 and ITGA6:ITGB4. Forms a ternary complex with IGFBP3 and ALS.</text>
</comment>
<comment type="subcellular location">
    <subcellularLocation>
        <location evidence="2">Secreted</location>
    </subcellularLocation>
</comment>
<comment type="similarity">
    <text evidence="6">Belongs to the insulin family.</text>
</comment>
<proteinExistence type="evidence at transcript level"/>
<dbReference type="EMBL" id="AY677085">
    <property type="protein sequence ID" value="AAT97354.1"/>
    <property type="molecule type" value="mRNA"/>
</dbReference>
<dbReference type="SMR" id="Q68LC0"/>
<dbReference type="STRING" id="61622.ENSRROP00000025479"/>
<dbReference type="Proteomes" id="UP000233200">
    <property type="component" value="Whole Genome Shotgun Assembly"/>
</dbReference>
<dbReference type="GO" id="GO:0035867">
    <property type="term" value="C:alphav-beta3 integrin-IGF-1-IGF1R complex"/>
    <property type="evidence" value="ECO:0000250"/>
    <property type="project" value="UniProtKB"/>
</dbReference>
<dbReference type="GO" id="GO:0070382">
    <property type="term" value="C:exocytic vesicle"/>
    <property type="evidence" value="ECO:0000250"/>
    <property type="project" value="UniProtKB"/>
</dbReference>
<dbReference type="GO" id="GO:0005615">
    <property type="term" value="C:extracellular space"/>
    <property type="evidence" value="ECO:0007669"/>
    <property type="project" value="InterPro"/>
</dbReference>
<dbReference type="GO" id="GO:0008083">
    <property type="term" value="F:growth factor activity"/>
    <property type="evidence" value="ECO:0007669"/>
    <property type="project" value="UniProtKB-KW"/>
</dbReference>
<dbReference type="GO" id="GO:0005179">
    <property type="term" value="F:hormone activity"/>
    <property type="evidence" value="ECO:0007669"/>
    <property type="project" value="InterPro"/>
</dbReference>
<dbReference type="GO" id="GO:0005159">
    <property type="term" value="F:insulin-like growth factor receptor binding"/>
    <property type="evidence" value="ECO:0000250"/>
    <property type="project" value="UniProtKB"/>
</dbReference>
<dbReference type="GO" id="GO:0008283">
    <property type="term" value="P:cell population proliferation"/>
    <property type="evidence" value="ECO:0007669"/>
    <property type="project" value="TreeGrafter"/>
</dbReference>
<dbReference type="GO" id="GO:0048009">
    <property type="term" value="P:insulin-like growth factor receptor signaling pathway"/>
    <property type="evidence" value="ECO:0000250"/>
    <property type="project" value="UniProtKB"/>
</dbReference>
<dbReference type="GO" id="GO:0043066">
    <property type="term" value="P:negative regulation of apoptotic process"/>
    <property type="evidence" value="ECO:0000250"/>
    <property type="project" value="UniProtKB"/>
</dbReference>
<dbReference type="GO" id="GO:0090201">
    <property type="term" value="P:negative regulation of release of cytochrome c from mitochondria"/>
    <property type="evidence" value="ECO:0000250"/>
    <property type="project" value="UniProtKB"/>
</dbReference>
<dbReference type="GO" id="GO:0034392">
    <property type="term" value="P:negative regulation of smooth muscle cell apoptotic process"/>
    <property type="evidence" value="ECO:0000250"/>
    <property type="project" value="UniProtKB"/>
</dbReference>
<dbReference type="GO" id="GO:0008284">
    <property type="term" value="P:positive regulation of cell population proliferation"/>
    <property type="evidence" value="ECO:0000250"/>
    <property type="project" value="UniProtKB"/>
</dbReference>
<dbReference type="GO" id="GO:0046326">
    <property type="term" value="P:positive regulation of D-glucose import"/>
    <property type="evidence" value="ECO:0000250"/>
    <property type="project" value="UniProtKB"/>
</dbReference>
<dbReference type="GO" id="GO:0045725">
    <property type="term" value="P:positive regulation of glycogen biosynthetic process"/>
    <property type="evidence" value="ECO:0000250"/>
    <property type="project" value="UniProtKB"/>
</dbReference>
<dbReference type="GO" id="GO:0043410">
    <property type="term" value="P:positive regulation of MAPK cascade"/>
    <property type="evidence" value="ECO:0000250"/>
    <property type="project" value="UniProtKB"/>
</dbReference>
<dbReference type="GO" id="GO:0051897">
    <property type="term" value="P:positive regulation of phosphatidylinositol 3-kinase/protein kinase B signal transduction"/>
    <property type="evidence" value="ECO:0007669"/>
    <property type="project" value="TreeGrafter"/>
</dbReference>
<dbReference type="CDD" id="cd04368">
    <property type="entry name" value="IlGF"/>
    <property type="match status" value="1"/>
</dbReference>
<dbReference type="FunFam" id="1.10.100.10:FF:000001">
    <property type="entry name" value="insulin-like growth factor I isoform X1"/>
    <property type="match status" value="1"/>
</dbReference>
<dbReference type="Gene3D" id="1.10.100.10">
    <property type="entry name" value="Insulin-like"/>
    <property type="match status" value="1"/>
</dbReference>
<dbReference type="InterPro" id="IPR022341">
    <property type="entry name" value="IGF-I"/>
</dbReference>
<dbReference type="InterPro" id="IPR016179">
    <property type="entry name" value="Insulin-like"/>
</dbReference>
<dbReference type="InterPro" id="IPR022350">
    <property type="entry name" value="Insulin-like_growth_factor"/>
</dbReference>
<dbReference type="InterPro" id="IPR036438">
    <property type="entry name" value="Insulin-like_sf"/>
</dbReference>
<dbReference type="InterPro" id="IPR022353">
    <property type="entry name" value="Insulin_CS"/>
</dbReference>
<dbReference type="InterPro" id="IPR022352">
    <property type="entry name" value="Insulin_family"/>
</dbReference>
<dbReference type="PANTHER" id="PTHR46845">
    <property type="entry name" value="INSULIN-LIKE GROWTH FACTOR I"/>
    <property type="match status" value="1"/>
</dbReference>
<dbReference type="PANTHER" id="PTHR46845:SF1">
    <property type="entry name" value="INSULIN-LIKE GROWTH FACTOR I"/>
    <property type="match status" value="1"/>
</dbReference>
<dbReference type="Pfam" id="PF00049">
    <property type="entry name" value="Insulin"/>
    <property type="match status" value="1"/>
</dbReference>
<dbReference type="PRINTS" id="PR02002">
    <property type="entry name" value="INSLNLIKEGF"/>
</dbReference>
<dbReference type="PRINTS" id="PR02005">
    <property type="entry name" value="INSLNLIKEGF1"/>
</dbReference>
<dbReference type="PRINTS" id="PR00276">
    <property type="entry name" value="INSULINFAMLY"/>
</dbReference>
<dbReference type="SMART" id="SM00078">
    <property type="entry name" value="IlGF"/>
    <property type="match status" value="1"/>
</dbReference>
<dbReference type="SUPFAM" id="SSF56994">
    <property type="entry name" value="Insulin-like"/>
    <property type="match status" value="1"/>
</dbReference>
<dbReference type="PROSITE" id="PS00262">
    <property type="entry name" value="INSULIN"/>
    <property type="match status" value="1"/>
</dbReference>
<protein>
    <recommendedName>
        <fullName evidence="3">Insulin-like growth factor 1</fullName>
    </recommendedName>
    <alternativeName>
        <fullName evidence="3">Insulin-like growth factor I</fullName>
        <shortName evidence="3">IGF-I</shortName>
    </alternativeName>
    <alternativeName>
        <fullName>Somatomedin</fullName>
    </alternativeName>
</protein>
<feature type="signal peptide">
    <location>
        <begin position="1"/>
        <end status="unknown"/>
    </location>
</feature>
<feature type="propeptide" id="PRO_0000015676" evidence="1">
    <location>
        <begin status="unknown"/>
        <end position="48"/>
    </location>
</feature>
<feature type="chain" id="PRO_0000015677" description="Insulin-like growth factor 1">
    <location>
        <begin position="49"/>
        <end position="118"/>
    </location>
</feature>
<feature type="propeptide" id="PRO_0000015678" description="E peptide">
    <location>
        <begin position="119"/>
        <end position="153"/>
    </location>
</feature>
<feature type="region of interest" description="B">
    <location>
        <begin position="49"/>
        <end position="77"/>
    </location>
</feature>
<feature type="region of interest" description="C">
    <location>
        <begin position="78"/>
        <end position="89"/>
    </location>
</feature>
<feature type="region of interest" description="A">
    <location>
        <begin position="90"/>
        <end position="110"/>
    </location>
</feature>
<feature type="region of interest" description="D">
    <location>
        <begin position="111"/>
        <end position="118"/>
    </location>
</feature>
<feature type="region of interest" description="Disordered" evidence="5">
    <location>
        <begin position="120"/>
        <end position="153"/>
    </location>
</feature>
<feature type="compositionally biased region" description="Basic and acidic residues" evidence="5">
    <location>
        <begin position="125"/>
        <end position="138"/>
    </location>
</feature>
<feature type="compositionally biased region" description="Polar residues" evidence="5">
    <location>
        <begin position="142"/>
        <end position="153"/>
    </location>
</feature>
<feature type="disulfide bond" evidence="3">
    <location>
        <begin position="54"/>
        <end position="96"/>
    </location>
</feature>
<feature type="disulfide bond" evidence="3">
    <location>
        <begin position="66"/>
        <end position="109"/>
    </location>
</feature>
<feature type="disulfide bond" evidence="3">
    <location>
        <begin position="95"/>
        <end position="100"/>
    </location>
</feature>